<dbReference type="EC" id="4.6.1.-" evidence="4"/>
<dbReference type="EMBL" id="FJ171527">
    <property type="protein sequence ID" value="ACN49023.1"/>
    <property type="molecule type" value="mRNA"/>
</dbReference>
<dbReference type="SMR" id="C0JB92"/>
<dbReference type="GO" id="GO:0005576">
    <property type="term" value="C:extracellular region"/>
    <property type="evidence" value="ECO:0007669"/>
    <property type="project" value="UniProtKB-SubCell"/>
</dbReference>
<dbReference type="GO" id="GO:0016829">
    <property type="term" value="F:lyase activity"/>
    <property type="evidence" value="ECO:0007669"/>
    <property type="project" value="UniProtKB-KW"/>
</dbReference>
<dbReference type="GO" id="GO:0046872">
    <property type="term" value="F:metal ion binding"/>
    <property type="evidence" value="ECO:0007669"/>
    <property type="project" value="UniProtKB-KW"/>
</dbReference>
<dbReference type="GO" id="GO:0008081">
    <property type="term" value="F:phosphoric diester hydrolase activity"/>
    <property type="evidence" value="ECO:0007669"/>
    <property type="project" value="InterPro"/>
</dbReference>
<dbReference type="GO" id="GO:0090729">
    <property type="term" value="F:toxin activity"/>
    <property type="evidence" value="ECO:0007669"/>
    <property type="project" value="UniProtKB-KW"/>
</dbReference>
<dbReference type="GO" id="GO:0031640">
    <property type="term" value="P:killing of cells of another organism"/>
    <property type="evidence" value="ECO:0007669"/>
    <property type="project" value="UniProtKB-KW"/>
</dbReference>
<dbReference type="GO" id="GO:0016042">
    <property type="term" value="P:lipid catabolic process"/>
    <property type="evidence" value="ECO:0007669"/>
    <property type="project" value="UniProtKB-KW"/>
</dbReference>
<dbReference type="CDD" id="cd08576">
    <property type="entry name" value="GDPD_like_SMaseD_PLD"/>
    <property type="match status" value="1"/>
</dbReference>
<dbReference type="Gene3D" id="3.20.20.190">
    <property type="entry name" value="Phosphatidylinositol (PI) phosphodiesterase"/>
    <property type="match status" value="1"/>
</dbReference>
<dbReference type="InterPro" id="IPR017946">
    <property type="entry name" value="PLC-like_Pdiesterase_TIM-brl"/>
</dbReference>
<dbReference type="SUPFAM" id="SSF51695">
    <property type="entry name" value="PLC-like phosphodiesterases"/>
    <property type="match status" value="1"/>
</dbReference>
<evidence type="ECO:0000250" key="1">
    <source>
        <dbReference type="UniProtKB" id="A0A0D4WTV1"/>
    </source>
</evidence>
<evidence type="ECO:0000250" key="2">
    <source>
        <dbReference type="UniProtKB" id="A0A0D4WV12"/>
    </source>
</evidence>
<evidence type="ECO:0000250" key="3">
    <source>
        <dbReference type="UniProtKB" id="P0CE80"/>
    </source>
</evidence>
<evidence type="ECO:0000250" key="4">
    <source>
        <dbReference type="UniProtKB" id="Q4ZFU2"/>
    </source>
</evidence>
<evidence type="ECO:0000250" key="5">
    <source>
        <dbReference type="UniProtKB" id="Q8I914"/>
    </source>
</evidence>
<evidence type="ECO:0000255" key="6"/>
<evidence type="ECO:0000303" key="7">
    <source>
    </source>
</evidence>
<evidence type="ECO:0000305" key="8"/>
<evidence type="ECO:0000305" key="9">
    <source>
    </source>
</evidence>
<keyword id="KW-0204">Cytolysis</keyword>
<keyword id="KW-1061">Dermonecrotic toxin</keyword>
<keyword id="KW-1015">Disulfide bond</keyword>
<keyword id="KW-0325">Glycoprotein</keyword>
<keyword id="KW-0354">Hemolysis</keyword>
<keyword id="KW-0442">Lipid degradation</keyword>
<keyword id="KW-0443">Lipid metabolism</keyword>
<keyword id="KW-0456">Lyase</keyword>
<keyword id="KW-0460">Magnesium</keyword>
<keyword id="KW-0479">Metal-binding</keyword>
<keyword id="KW-0964">Secreted</keyword>
<keyword id="KW-0800">Toxin</keyword>
<reference key="1">
    <citation type="journal article" date="2009" name="Mol. Biol. Evol.">
        <title>Molecular evolution, functional variation, and proposed nomenclature of the gene family that includes sphingomyelinase D in sicariid spider venoms.</title>
        <authorList>
            <person name="Binford G.J."/>
            <person name="Bodner M.R."/>
            <person name="Cordes M.H."/>
            <person name="Baldwin K.L."/>
            <person name="Rynerson M.R."/>
            <person name="Burns S.N."/>
            <person name="Zobel-Thropp P.A."/>
        </authorList>
    </citation>
    <scope>NUCLEOTIDE SEQUENCE [MRNA]</scope>
    <scope>NOMENCLATURE</scope>
    <source>
        <strain>Grootfontein</strain>
        <tissue>Venom gland</tissue>
    </source>
</reference>
<organism>
    <name type="scientific">Loxosceles spinulosa</name>
    <name type="common">Recluse spider</name>
    <dbReference type="NCBI Taxonomy" id="571532"/>
    <lineage>
        <taxon>Eukaryota</taxon>
        <taxon>Metazoa</taxon>
        <taxon>Ecdysozoa</taxon>
        <taxon>Arthropoda</taxon>
        <taxon>Chelicerata</taxon>
        <taxon>Arachnida</taxon>
        <taxon>Araneae</taxon>
        <taxon>Araneomorphae</taxon>
        <taxon>Haplogynae</taxon>
        <taxon>Scytodoidea</taxon>
        <taxon>Sicariidae</taxon>
        <taxon>Loxosceles</taxon>
    </lineage>
</organism>
<sequence length="274" mass="31636">WIMGHMVNKKYQVDEFANLGANAIEFDVTFDPNSKADYTYHKVPCDCGRTCGKYEVFTEFLSYVRNKTTPGHPSFREKLILLQLDLKMSGFSDSESNEAGKDVAKKLLNYYWNRGSNGGRAYILLSIPSIDNQLFLKGFKLQLETEGYSEYLEKVGVDFSANEDLNSILNVLGRLEEEHVWQSDGITDCLARRSTRLRDAIKKRDTGDDRYGIKKVYTWTVDYYPSIRYYLRLGIDGVMTNFPNRVEYILNEEEFSGSLRMATIDDNPWEKYVG</sequence>
<feature type="chain" id="PRO_0000392904" description="Dermonecrotic toxin LspiSicTox-betaIII1 G">
    <location>
        <begin position="1" status="less than"/>
        <end position="274"/>
    </location>
</feature>
<feature type="active site" evidence="5">
    <location>
        <position position="5"/>
    </location>
</feature>
<feature type="active site" description="Nucleophile" evidence="5">
    <location>
        <position position="41"/>
    </location>
</feature>
<feature type="binding site" evidence="5">
    <location>
        <position position="25"/>
    </location>
    <ligand>
        <name>Mg(2+)</name>
        <dbReference type="ChEBI" id="CHEBI:18420"/>
    </ligand>
</feature>
<feature type="binding site" evidence="5">
    <location>
        <position position="27"/>
    </location>
    <ligand>
        <name>Mg(2+)</name>
        <dbReference type="ChEBI" id="CHEBI:18420"/>
    </ligand>
</feature>
<feature type="binding site" evidence="5">
    <location>
        <position position="85"/>
    </location>
    <ligand>
        <name>Mg(2+)</name>
        <dbReference type="ChEBI" id="CHEBI:18420"/>
    </ligand>
</feature>
<feature type="glycosylation site" description="N-linked (GlcNAc...) asparagine" evidence="6">
    <location>
        <position position="66"/>
    </location>
</feature>
<feature type="disulfide bond" evidence="3">
    <location>
        <begin position="45"/>
        <end position="51"/>
    </location>
</feature>
<feature type="disulfide bond" evidence="3">
    <location>
        <begin position="47"/>
        <end position="189"/>
    </location>
</feature>
<feature type="non-terminal residue">
    <location>
        <position position="1"/>
    </location>
</feature>
<comment type="function">
    <text evidence="1 3">Dermonecrotic toxins cleave the phosphodiester linkage between the phosphate and headgroup of certain phospholipids (sphingolipid and lysolipid substrates), forming an alcohol (often choline) and a cyclic phosphate (By similarity). This toxin acts on sphingomyelin (SM) (By similarity). It may also act on ceramide phosphoethanolamine (CPE), lysophosphatidylcholine (LPC) and lysophosphatidylethanolamine (LPE), but not on lysophosphatidylserine (LPS), and lysophosphatidylglycerol (LPG) (By similarity). It acts by transphosphatidylation, releasing exclusively cyclic phosphate products as second products (By similarity). Induces dermonecrosis, hemolysis, increased vascular permeability, edema, inflammatory response, and platelet aggregation (By similarity).</text>
</comment>
<comment type="catalytic activity">
    <reaction evidence="1">
        <text>an N-(acyl)-sphingosylphosphocholine = an N-(acyl)-sphingosyl-1,3-cyclic phosphate + choline</text>
        <dbReference type="Rhea" id="RHEA:60652"/>
        <dbReference type="ChEBI" id="CHEBI:15354"/>
        <dbReference type="ChEBI" id="CHEBI:64583"/>
        <dbReference type="ChEBI" id="CHEBI:143892"/>
    </reaction>
</comment>
<comment type="catalytic activity">
    <reaction evidence="1">
        <text>an N-(acyl)-sphingosylphosphoethanolamine = an N-(acyl)-sphingosyl-1,3-cyclic phosphate + ethanolamine</text>
        <dbReference type="Rhea" id="RHEA:60648"/>
        <dbReference type="ChEBI" id="CHEBI:57603"/>
        <dbReference type="ChEBI" id="CHEBI:143891"/>
        <dbReference type="ChEBI" id="CHEBI:143892"/>
    </reaction>
</comment>
<comment type="catalytic activity">
    <reaction evidence="1">
        <text>a 1-acyl-sn-glycero-3-phosphocholine = a 1-acyl-sn-glycero-2,3-cyclic phosphate + choline</text>
        <dbReference type="Rhea" id="RHEA:60700"/>
        <dbReference type="ChEBI" id="CHEBI:15354"/>
        <dbReference type="ChEBI" id="CHEBI:58168"/>
        <dbReference type="ChEBI" id="CHEBI:143947"/>
    </reaction>
</comment>
<comment type="catalytic activity">
    <reaction evidence="1">
        <text>a 1-acyl-sn-glycero-3-phosphoethanolamine = a 1-acyl-sn-glycero-2,3-cyclic phosphate + ethanolamine</text>
        <dbReference type="Rhea" id="RHEA:60704"/>
        <dbReference type="ChEBI" id="CHEBI:57603"/>
        <dbReference type="ChEBI" id="CHEBI:64381"/>
        <dbReference type="ChEBI" id="CHEBI:143947"/>
    </reaction>
</comment>
<comment type="cofactor">
    <cofactor evidence="5">
        <name>Mg(2+)</name>
        <dbReference type="ChEBI" id="CHEBI:18420"/>
    </cofactor>
    <text evidence="5">Binds 1 Mg(2+) ion per subunit.</text>
</comment>
<comment type="subcellular location">
    <subcellularLocation>
        <location evidence="9">Secreted</location>
    </subcellularLocation>
</comment>
<comment type="tissue specificity">
    <text evidence="9">Expressed by the venom gland.</text>
</comment>
<comment type="miscellaneous">
    <text evidence="8">The name 'Dermonecrotic toxin LspiSicTox-betaIII1' has been assigned by Binford et al., 2009 to AC C0JB92 and AC C0JB94, both derived from Loxosceles spinulosa specimens collected in Namibia (Grootfontein) and South Africa (Borakalalo), respectively. To distinguish between these proteins in UniProtKB, the letters G (for Grootfontein) and B (for Borakalalo) have been appended to their names.</text>
</comment>
<comment type="similarity">
    <text evidence="8">Belongs to the arthropod phospholipase D family. Class II subfamily.</text>
</comment>
<comment type="caution">
    <text evidence="1 2 4">The most common activity assay for dermonecrotic toxins detects enzymatic activity by monitoring choline release from substrate. Liberation of choline from sphingomyelin (SM) or lysophosphatidylcholine (LPC) is commonly assumed to result from substrate hydrolysis, giving either ceramide-1-phosphate (C1P) or lysophosphatidic acid (LPA), respectively, as a second product. However, two studies from Lajoie and colleagues (2013 and 2015) report the observation of exclusive formation of cyclic phosphate products as second products, resulting from intramolecular transphosphatidylation. Cyclic phosphates have vastly different biological properties from their monoester counterparts, and they may be relevant to the pathology of brown spider envenomation.</text>
</comment>
<name>B31_LOXSN</name>
<protein>
    <recommendedName>
        <fullName evidence="7 8">Dermonecrotic toxin LspiSicTox-betaIII1 G</fullName>
        <ecNumber evidence="4">4.6.1.-</ecNumber>
    </recommendedName>
    <alternativeName>
        <fullName>Phospholipase D</fullName>
        <shortName>PLD</shortName>
    </alternativeName>
    <alternativeName>
        <fullName>Sphingomyelin phosphodiesterase D</fullName>
        <shortName>SMD</shortName>
        <shortName>SMase D</shortName>
        <shortName>Sphingomyelinase D</shortName>
    </alternativeName>
</protein>
<proteinExistence type="evidence at transcript level"/>
<accession>C0JB92</accession>